<accession>Q03411</accession>
<evidence type="ECO:0000255" key="1"/>
<evidence type="ECO:0000305" key="2"/>
<keyword id="KW-0472">Membrane</keyword>
<keyword id="KW-1185">Reference proteome</keyword>
<keyword id="KW-0762">Sugar transport</keyword>
<keyword id="KW-0769">Symport</keyword>
<keyword id="KW-0812">Transmembrane</keyword>
<keyword id="KW-1133">Transmembrane helix</keyword>
<keyword id="KW-0813">Transport</keyword>
<reference key="1">
    <citation type="journal article" date="1992" name="EMBO J.">
        <title>Isolation and characterization of a sucrose carrier cDNA from spinach by functional expression in yeast.</title>
        <authorList>
            <person name="Riesmeier J.W."/>
            <person name="Willmitzer L."/>
            <person name="Frommer W.B."/>
        </authorList>
    </citation>
    <scope>NUCLEOTIDE SEQUENCE [MRNA]</scope>
    <source>
        <tissue>Leaf</tissue>
    </source>
</reference>
<name>SUT_SPIOL</name>
<organism>
    <name type="scientific">Spinacia oleracea</name>
    <name type="common">Spinach</name>
    <dbReference type="NCBI Taxonomy" id="3562"/>
    <lineage>
        <taxon>Eukaryota</taxon>
        <taxon>Viridiplantae</taxon>
        <taxon>Streptophyta</taxon>
        <taxon>Embryophyta</taxon>
        <taxon>Tracheophyta</taxon>
        <taxon>Spermatophyta</taxon>
        <taxon>Magnoliopsida</taxon>
        <taxon>eudicotyledons</taxon>
        <taxon>Gunneridae</taxon>
        <taxon>Pentapetalae</taxon>
        <taxon>Caryophyllales</taxon>
        <taxon>Chenopodiaceae</taxon>
        <taxon>Chenopodioideae</taxon>
        <taxon>Anserineae</taxon>
        <taxon>Spinacia</taxon>
    </lineage>
</organism>
<sequence>MAGRNIKNGENNKIAGSSLHLEKNPTTPPEAEATLKKLGLVASVAAGVQFGWALQLSLLTPYVQLLGIPHTWAAYIWLCGPISGMIVQPLVGYYSDRCTSRFGRRRPFIAAGAALVAVAVGLIGFAADIGAASGDPTGNVAKPRAIAVFVVGFWILDVANNTLQGPCRALLADMAAGSQTKTRYANAFFSFFMALGNIGGYAAGSYSRLYTVFPFTKTAACDVYCANLKSCFFISITLLIVLTILALSVVKERQITIDEIQEEEDLKNRNNSSGCARLPFFGQLIGALKDLPKPMLILLLVTALNWIAWFPFLLFDTDWMGKEVYGGTVGEGKLYDQGVHAGALGLMINSVVLGVMSLSIEGLARMVGGAKRLWGIVNIILAVCLAMTVLVTKSAEHFRDSHHIMGSAVPPPPPAGVKGGALAIFAVLGIPLAITFSIPFALASIFSASSGSGQGLSLGVLNLAIVVPQMFVSVTSGPWDAMFGGGNLPAFVVGAVAATASAVLSFTLLPSPPPEAKIGGSMGGH</sequence>
<dbReference type="EMBL" id="X67125">
    <property type="protein sequence ID" value="CAA47604.1"/>
    <property type="molecule type" value="mRNA"/>
</dbReference>
<dbReference type="PIR" id="S28052">
    <property type="entry name" value="S28052"/>
</dbReference>
<dbReference type="RefSeq" id="NP_001413328.1">
    <property type="nucleotide sequence ID" value="NM_001426399.1"/>
</dbReference>
<dbReference type="SMR" id="Q03411"/>
<dbReference type="GeneID" id="110788812"/>
<dbReference type="OrthoDB" id="28755at2759"/>
<dbReference type="UniPathway" id="UPA00238"/>
<dbReference type="Proteomes" id="UP001155700">
    <property type="component" value="Unplaced"/>
</dbReference>
<dbReference type="GO" id="GO:0005886">
    <property type="term" value="C:plasma membrane"/>
    <property type="evidence" value="ECO:0000318"/>
    <property type="project" value="GO_Central"/>
</dbReference>
<dbReference type="GO" id="GO:0005773">
    <property type="term" value="C:vacuole"/>
    <property type="evidence" value="ECO:0000318"/>
    <property type="project" value="GO_Central"/>
</dbReference>
<dbReference type="GO" id="GO:0008506">
    <property type="term" value="F:sucrose:proton symporter activity"/>
    <property type="evidence" value="ECO:0000318"/>
    <property type="project" value="GO_Central"/>
</dbReference>
<dbReference type="GO" id="GO:0005985">
    <property type="term" value="P:sucrose metabolic process"/>
    <property type="evidence" value="ECO:0007669"/>
    <property type="project" value="UniProtKB-UniPathway"/>
</dbReference>
<dbReference type="CDD" id="cd17313">
    <property type="entry name" value="MFS_SLC45_SUC"/>
    <property type="match status" value="1"/>
</dbReference>
<dbReference type="FunFam" id="1.20.1250.20:FF:000174">
    <property type="entry name" value="Sucrose transport protein"/>
    <property type="match status" value="1"/>
</dbReference>
<dbReference type="Gene3D" id="1.20.1250.20">
    <property type="entry name" value="MFS general substrate transporter like domains"/>
    <property type="match status" value="1"/>
</dbReference>
<dbReference type="InterPro" id="IPR036259">
    <property type="entry name" value="MFS_trans_sf"/>
</dbReference>
<dbReference type="InterPro" id="IPR005989">
    <property type="entry name" value="Suc_symporter_pln"/>
</dbReference>
<dbReference type="NCBIfam" id="TIGR01301">
    <property type="entry name" value="GPH_sucrose"/>
    <property type="match status" value="1"/>
</dbReference>
<dbReference type="PANTHER" id="PTHR19432:SF70">
    <property type="entry name" value="SUCROSE TRANSPORT PROTEIN SUC1-RELATED"/>
    <property type="match status" value="1"/>
</dbReference>
<dbReference type="PANTHER" id="PTHR19432">
    <property type="entry name" value="SUGAR TRANSPORTER"/>
    <property type="match status" value="1"/>
</dbReference>
<dbReference type="Pfam" id="PF13347">
    <property type="entry name" value="MFS_2"/>
    <property type="match status" value="1"/>
</dbReference>
<dbReference type="SUPFAM" id="SSF103473">
    <property type="entry name" value="MFS general substrate transporter"/>
    <property type="match status" value="1"/>
</dbReference>
<feature type="chain" id="PRO_0000122531" description="Sucrose transport protein">
    <location>
        <begin position="1"/>
        <end position="525"/>
    </location>
</feature>
<feature type="topological domain" description="Cytoplasmic" evidence="1">
    <location>
        <begin position="1"/>
        <end position="37"/>
    </location>
</feature>
<feature type="transmembrane region" description="Helical; Name=1" evidence="1">
    <location>
        <begin position="38"/>
        <end position="58"/>
    </location>
</feature>
<feature type="transmembrane region" description="Helical; Name=2" evidence="1">
    <location>
        <begin position="72"/>
        <end position="92"/>
    </location>
</feature>
<feature type="transmembrane region" description="Helical; Name=3" evidence="1">
    <location>
        <begin position="107"/>
        <end position="127"/>
    </location>
</feature>
<feature type="transmembrane region" description="Helical; Name=4" evidence="1">
    <location>
        <begin position="145"/>
        <end position="165"/>
    </location>
</feature>
<feature type="transmembrane region" description="Helical; Name=5" evidence="1">
    <location>
        <begin position="184"/>
        <end position="204"/>
    </location>
</feature>
<feature type="transmembrane region" description="Helical; Name=6" evidence="1">
    <location>
        <begin position="230"/>
        <end position="250"/>
    </location>
</feature>
<feature type="transmembrane region" description="Helical; Name=7" evidence="1">
    <location>
        <begin position="295"/>
        <end position="315"/>
    </location>
</feature>
<feature type="transmembrane region" description="Helical; Name=8" evidence="1">
    <location>
        <begin position="338"/>
        <end position="358"/>
    </location>
</feature>
<feature type="transmembrane region" description="Helical; Name=9" evidence="1">
    <location>
        <begin position="373"/>
        <end position="393"/>
    </location>
</feature>
<feature type="transmembrane region" description="Helical; Name=10" evidence="1">
    <location>
        <begin position="422"/>
        <end position="442"/>
    </location>
</feature>
<feature type="transmembrane region" description="Helical; Name=11" evidence="1">
    <location>
        <begin position="455"/>
        <end position="475"/>
    </location>
</feature>
<feature type="transmembrane region" description="Helical; Name=12" evidence="1">
    <location>
        <begin position="488"/>
        <end position="508"/>
    </location>
</feature>
<feature type="topological domain" description="Cytoplasmic" evidence="1">
    <location>
        <begin position="509"/>
        <end position="525"/>
    </location>
</feature>
<comment type="function">
    <text>Responsible for the transport of sucrose into the cell, with the concomitant uptake of protons (symport system). Can also transport maltose at a lesser rate.</text>
</comment>
<comment type="pathway">
    <text>Glycan biosynthesis; sucrose metabolism.</text>
</comment>
<comment type="subcellular location">
    <subcellularLocation>
        <location>Membrane</location>
        <topology>Multi-pass membrane protein</topology>
    </subcellularLocation>
</comment>
<comment type="similarity">
    <text evidence="2">Belongs to the glycoside-pentoside-hexuronide (GPH) cation symporter transporter (TC 2.A.2.4) family.</text>
</comment>
<protein>
    <recommendedName>
        <fullName>Sucrose transport protein</fullName>
    </recommendedName>
    <alternativeName>
        <fullName>Sucrose permease</fullName>
    </alternativeName>
    <alternativeName>
        <fullName>Sucrose-proton symporter</fullName>
    </alternativeName>
</protein>
<proteinExistence type="evidence at transcript level"/>